<proteinExistence type="inferred from homology"/>
<reference key="1">
    <citation type="submission" date="2007-11" db="EMBL/GenBank/DDBJ databases">
        <title>Complete genome sequence of Clostridium phytofermentans ISDg.</title>
        <authorList>
            <person name="Leschine S.B."/>
            <person name="Warnick T.A."/>
            <person name="Blanchard J.L."/>
            <person name="Schnell D.J."/>
            <person name="Petit E.L."/>
            <person name="LaTouf W.G."/>
            <person name="Copeland A."/>
            <person name="Lucas S."/>
            <person name="Lapidus A."/>
            <person name="Barry K."/>
            <person name="Glavina del Rio T."/>
            <person name="Dalin E."/>
            <person name="Tice H."/>
            <person name="Pitluck S."/>
            <person name="Kiss H."/>
            <person name="Brettin T."/>
            <person name="Bruce D."/>
            <person name="Detter J.C."/>
            <person name="Han C."/>
            <person name="Kuske C."/>
            <person name="Schmutz J."/>
            <person name="Larimer F."/>
            <person name="Land M."/>
            <person name="Hauser L."/>
            <person name="Kyrpides N."/>
            <person name="Kim E.A."/>
            <person name="Richardson P."/>
        </authorList>
    </citation>
    <scope>NUCLEOTIDE SEQUENCE [LARGE SCALE GENOMIC DNA]</scope>
    <source>
        <strain>ATCC 700394 / DSM 18823 / ISDg</strain>
    </source>
</reference>
<feature type="chain" id="PRO_0000382298" description="Glutamate-1-semialdehyde 2,1-aminomutase 1">
    <location>
        <begin position="1"/>
        <end position="427"/>
    </location>
</feature>
<feature type="modified residue" description="N6-(pyridoxal phosphate)lysine" evidence="1">
    <location>
        <position position="265"/>
    </location>
</feature>
<gene>
    <name evidence="1" type="primary">hemL1</name>
    <name type="ordered locus">Cphy_1373</name>
</gene>
<dbReference type="EC" id="5.4.3.8" evidence="1"/>
<dbReference type="EMBL" id="CP000885">
    <property type="protein sequence ID" value="ABX41748.1"/>
    <property type="molecule type" value="Genomic_DNA"/>
</dbReference>
<dbReference type="RefSeq" id="WP_012199402.1">
    <property type="nucleotide sequence ID" value="NC_010001.1"/>
</dbReference>
<dbReference type="SMR" id="A9KP86"/>
<dbReference type="STRING" id="357809.Cphy_1373"/>
<dbReference type="KEGG" id="cpy:Cphy_1373"/>
<dbReference type="eggNOG" id="COG0001">
    <property type="taxonomic scope" value="Bacteria"/>
</dbReference>
<dbReference type="HOGENOM" id="CLU_016922_1_5_9"/>
<dbReference type="OrthoDB" id="9807885at2"/>
<dbReference type="UniPathway" id="UPA00251">
    <property type="reaction ID" value="UER00317"/>
</dbReference>
<dbReference type="Proteomes" id="UP000000370">
    <property type="component" value="Chromosome"/>
</dbReference>
<dbReference type="GO" id="GO:0005737">
    <property type="term" value="C:cytoplasm"/>
    <property type="evidence" value="ECO:0007669"/>
    <property type="project" value="UniProtKB-SubCell"/>
</dbReference>
<dbReference type="GO" id="GO:0042286">
    <property type="term" value="F:glutamate-1-semialdehyde 2,1-aminomutase activity"/>
    <property type="evidence" value="ECO:0007669"/>
    <property type="project" value="UniProtKB-UniRule"/>
</dbReference>
<dbReference type="GO" id="GO:0030170">
    <property type="term" value="F:pyridoxal phosphate binding"/>
    <property type="evidence" value="ECO:0007669"/>
    <property type="project" value="InterPro"/>
</dbReference>
<dbReference type="GO" id="GO:0008483">
    <property type="term" value="F:transaminase activity"/>
    <property type="evidence" value="ECO:0007669"/>
    <property type="project" value="InterPro"/>
</dbReference>
<dbReference type="GO" id="GO:0006782">
    <property type="term" value="P:protoporphyrinogen IX biosynthetic process"/>
    <property type="evidence" value="ECO:0007669"/>
    <property type="project" value="UniProtKB-UniRule"/>
</dbReference>
<dbReference type="CDD" id="cd00610">
    <property type="entry name" value="OAT_like"/>
    <property type="match status" value="1"/>
</dbReference>
<dbReference type="FunFam" id="3.40.640.10:FF:000021">
    <property type="entry name" value="Glutamate-1-semialdehyde 2,1-aminomutase"/>
    <property type="match status" value="1"/>
</dbReference>
<dbReference type="Gene3D" id="3.90.1150.10">
    <property type="entry name" value="Aspartate Aminotransferase, domain 1"/>
    <property type="match status" value="1"/>
</dbReference>
<dbReference type="Gene3D" id="3.40.640.10">
    <property type="entry name" value="Type I PLP-dependent aspartate aminotransferase-like (Major domain)"/>
    <property type="match status" value="1"/>
</dbReference>
<dbReference type="HAMAP" id="MF_00375">
    <property type="entry name" value="HemL_aminotrans_3"/>
    <property type="match status" value="1"/>
</dbReference>
<dbReference type="InterPro" id="IPR004639">
    <property type="entry name" value="4pyrrol_synth_GluAld_NH2Trfase"/>
</dbReference>
<dbReference type="InterPro" id="IPR005814">
    <property type="entry name" value="Aminotrans_3"/>
</dbReference>
<dbReference type="InterPro" id="IPR049704">
    <property type="entry name" value="Aminotrans_3_PPA_site"/>
</dbReference>
<dbReference type="InterPro" id="IPR015424">
    <property type="entry name" value="PyrdxlP-dep_Trfase"/>
</dbReference>
<dbReference type="InterPro" id="IPR015421">
    <property type="entry name" value="PyrdxlP-dep_Trfase_major"/>
</dbReference>
<dbReference type="InterPro" id="IPR015422">
    <property type="entry name" value="PyrdxlP-dep_Trfase_small"/>
</dbReference>
<dbReference type="NCBIfam" id="TIGR00713">
    <property type="entry name" value="hemL"/>
    <property type="match status" value="1"/>
</dbReference>
<dbReference type="NCBIfam" id="NF000818">
    <property type="entry name" value="PRK00062.1"/>
    <property type="match status" value="1"/>
</dbReference>
<dbReference type="PANTHER" id="PTHR43713">
    <property type="entry name" value="GLUTAMATE-1-SEMIALDEHYDE 2,1-AMINOMUTASE"/>
    <property type="match status" value="1"/>
</dbReference>
<dbReference type="PANTHER" id="PTHR43713:SF3">
    <property type="entry name" value="GLUTAMATE-1-SEMIALDEHYDE 2,1-AMINOMUTASE 1, CHLOROPLASTIC-RELATED"/>
    <property type="match status" value="1"/>
</dbReference>
<dbReference type="Pfam" id="PF00202">
    <property type="entry name" value="Aminotran_3"/>
    <property type="match status" value="1"/>
</dbReference>
<dbReference type="SUPFAM" id="SSF53383">
    <property type="entry name" value="PLP-dependent transferases"/>
    <property type="match status" value="1"/>
</dbReference>
<dbReference type="PROSITE" id="PS00600">
    <property type="entry name" value="AA_TRANSFER_CLASS_3"/>
    <property type="match status" value="1"/>
</dbReference>
<organism>
    <name type="scientific">Lachnoclostridium phytofermentans (strain ATCC 700394 / DSM 18823 / ISDg)</name>
    <name type="common">Clostridium phytofermentans</name>
    <dbReference type="NCBI Taxonomy" id="357809"/>
    <lineage>
        <taxon>Bacteria</taxon>
        <taxon>Bacillati</taxon>
        <taxon>Bacillota</taxon>
        <taxon>Clostridia</taxon>
        <taxon>Lachnospirales</taxon>
        <taxon>Lachnospiraceae</taxon>
    </lineage>
</organism>
<protein>
    <recommendedName>
        <fullName evidence="1">Glutamate-1-semialdehyde 2,1-aminomutase 1</fullName>
        <shortName evidence="1">GSA 1</shortName>
        <ecNumber evidence="1">5.4.3.8</ecNumber>
    </recommendedName>
    <alternativeName>
        <fullName evidence="1">Glutamate-1-semialdehyde aminotransferase 1</fullName>
        <shortName evidence="1">GSA-AT 1</shortName>
    </alternativeName>
</protein>
<evidence type="ECO:0000255" key="1">
    <source>
        <dbReference type="HAMAP-Rule" id="MF_00375"/>
    </source>
</evidence>
<name>GSA1_LACP7</name>
<comment type="catalytic activity">
    <reaction evidence="1">
        <text>(S)-4-amino-5-oxopentanoate = 5-aminolevulinate</text>
        <dbReference type="Rhea" id="RHEA:14265"/>
        <dbReference type="ChEBI" id="CHEBI:57501"/>
        <dbReference type="ChEBI" id="CHEBI:356416"/>
        <dbReference type="EC" id="5.4.3.8"/>
    </reaction>
</comment>
<comment type="cofactor">
    <cofactor evidence="1">
        <name>pyridoxal 5'-phosphate</name>
        <dbReference type="ChEBI" id="CHEBI:597326"/>
    </cofactor>
</comment>
<comment type="pathway">
    <text evidence="1">Porphyrin-containing compound metabolism; protoporphyrin-IX biosynthesis; 5-aminolevulinate from L-glutamyl-tRNA(Glu): step 2/2.</text>
</comment>
<comment type="subunit">
    <text evidence="1">Homodimer.</text>
</comment>
<comment type="subcellular location">
    <subcellularLocation>
        <location evidence="1">Cytoplasm</location>
    </subcellularLocation>
</comment>
<comment type="similarity">
    <text evidence="1">Belongs to the class-III pyridoxal-phosphate-dependent aminotransferase family. HemL subfamily.</text>
</comment>
<keyword id="KW-0963">Cytoplasm</keyword>
<keyword id="KW-0413">Isomerase</keyword>
<keyword id="KW-0627">Porphyrin biosynthesis</keyword>
<keyword id="KW-0663">Pyridoxal phosphate</keyword>
<keyword id="KW-1185">Reference proteome</keyword>
<accession>A9KP86</accession>
<sequence length="427" mass="46489">MTRSEELFKEALKVIPGGVNSPVRAFGSVGESPRFIKRAEGAHLYDVDGKEYIDYICSWGPMILGHNHPDILESVVQACQNGLSFGAVTEMEVKMAKLICELVPSIEMVRMVNSGTEAVMSAIRVARGYTGRNKIIKFNGCYHGHSDGLLVKAGSGVMTAGVPDSLGVPKGCTEDTLTANYNDITGVQELFNQYRSDIAAVIVEPVAANMGVVLPKEGFLHGLRKLCNENGTVLIFDEVITGFRLGIDGAQGYYGVTPDLTTYGKIIGAGMPVGAYGGRKEIMEVVAPLGAVYQAGTLSGNPVAMTAGYTQLTILKENPDYYTKLNQMGELLFGDIEMKFRRAGIPFQMNHVGSLGSLFFAKEEVYDYQSAKASDTEQYKAYFKYMLNKGIYLAPAQFEAMFLSVAHGEEEIKQTLDTMDGFLESVR</sequence>